<dbReference type="EC" id="1.2.1.10" evidence="1"/>
<dbReference type="EMBL" id="CP000647">
    <property type="protein sequence ID" value="ABR77546.1"/>
    <property type="molecule type" value="Genomic_DNA"/>
</dbReference>
<dbReference type="RefSeq" id="WP_014907417.1">
    <property type="nucleotide sequence ID" value="NC_009648.1"/>
</dbReference>
<dbReference type="SMR" id="A6TAC5"/>
<dbReference type="STRING" id="272620.KPN_02118"/>
<dbReference type="PaxDb" id="272620-KPN_02118"/>
<dbReference type="EnsemblBacteria" id="ABR77546">
    <property type="protein sequence ID" value="ABR77546"/>
    <property type="gene ID" value="KPN_02118"/>
</dbReference>
<dbReference type="KEGG" id="kpn:KPN_02118"/>
<dbReference type="HOGENOM" id="CLU_062208_0_0_6"/>
<dbReference type="UniPathway" id="UPA00714"/>
<dbReference type="Proteomes" id="UP000000265">
    <property type="component" value="Chromosome"/>
</dbReference>
<dbReference type="GO" id="GO:0008774">
    <property type="term" value="F:acetaldehyde dehydrogenase (acetylating) activity"/>
    <property type="evidence" value="ECO:0007669"/>
    <property type="project" value="UniProtKB-UniRule"/>
</dbReference>
<dbReference type="GO" id="GO:0051287">
    <property type="term" value="F:NAD binding"/>
    <property type="evidence" value="ECO:0007669"/>
    <property type="project" value="UniProtKB-UniRule"/>
</dbReference>
<dbReference type="GO" id="GO:0019380">
    <property type="term" value="P:3-phenylpropionate catabolic process"/>
    <property type="evidence" value="ECO:0007669"/>
    <property type="project" value="UniProtKB-UniRule"/>
</dbReference>
<dbReference type="CDD" id="cd23933">
    <property type="entry name" value="ALDH_C"/>
    <property type="match status" value="1"/>
</dbReference>
<dbReference type="FunFam" id="3.30.360.10:FF:000021">
    <property type="entry name" value="Acetaldehyde dehydrogenase"/>
    <property type="match status" value="1"/>
</dbReference>
<dbReference type="Gene3D" id="3.30.360.10">
    <property type="entry name" value="Dihydrodipicolinate Reductase, domain 2"/>
    <property type="match status" value="1"/>
</dbReference>
<dbReference type="Gene3D" id="3.40.50.720">
    <property type="entry name" value="NAD(P)-binding Rossmann-like Domain"/>
    <property type="match status" value="1"/>
</dbReference>
<dbReference type="HAMAP" id="MF_01657">
    <property type="entry name" value="Ac_ald_DH_ac"/>
    <property type="match status" value="1"/>
</dbReference>
<dbReference type="InterPro" id="IPR003361">
    <property type="entry name" value="Acetaldehyde_dehydrogenase"/>
</dbReference>
<dbReference type="InterPro" id="IPR015426">
    <property type="entry name" value="Acetylaldehyde_DH_C"/>
</dbReference>
<dbReference type="InterPro" id="IPR036291">
    <property type="entry name" value="NAD(P)-bd_dom_sf"/>
</dbReference>
<dbReference type="InterPro" id="IPR000534">
    <property type="entry name" value="Semialdehyde_DH_NAD-bd"/>
</dbReference>
<dbReference type="NCBIfam" id="TIGR03215">
    <property type="entry name" value="ac_ald_DH_ac"/>
    <property type="match status" value="1"/>
</dbReference>
<dbReference type="NCBIfam" id="NF006157">
    <property type="entry name" value="PRK08300.1"/>
    <property type="match status" value="1"/>
</dbReference>
<dbReference type="Pfam" id="PF09290">
    <property type="entry name" value="AcetDehyd-dimer"/>
    <property type="match status" value="1"/>
</dbReference>
<dbReference type="Pfam" id="PF01118">
    <property type="entry name" value="Semialdhyde_dh"/>
    <property type="match status" value="1"/>
</dbReference>
<dbReference type="PIRSF" id="PIRSF015689">
    <property type="entry name" value="Actaldh_dh_actl"/>
    <property type="match status" value="1"/>
</dbReference>
<dbReference type="SMART" id="SM00859">
    <property type="entry name" value="Semialdhyde_dh"/>
    <property type="match status" value="1"/>
</dbReference>
<dbReference type="SUPFAM" id="SSF55347">
    <property type="entry name" value="Glyceraldehyde-3-phosphate dehydrogenase-like, C-terminal domain"/>
    <property type="match status" value="1"/>
</dbReference>
<dbReference type="SUPFAM" id="SSF51735">
    <property type="entry name" value="NAD(P)-binding Rossmann-fold domains"/>
    <property type="match status" value="1"/>
</dbReference>
<gene>
    <name evidence="1" type="primary">mhpF</name>
    <name type="ordered locus">KPN78578_20850</name>
    <name type="ORF">KPN_02118</name>
</gene>
<name>ACDH_KLEP7</name>
<comment type="function">
    <text evidence="1">Catalyzes the conversion of acetaldehyde to acetyl-CoA, using NAD(+) and coenzyme A. Is the final enzyme in the meta-cleavage pathway for the degradation of aromatic compounds.</text>
</comment>
<comment type="catalytic activity">
    <reaction evidence="1">
        <text>acetaldehyde + NAD(+) + CoA = acetyl-CoA + NADH + H(+)</text>
        <dbReference type="Rhea" id="RHEA:23288"/>
        <dbReference type="ChEBI" id="CHEBI:15343"/>
        <dbReference type="ChEBI" id="CHEBI:15378"/>
        <dbReference type="ChEBI" id="CHEBI:57287"/>
        <dbReference type="ChEBI" id="CHEBI:57288"/>
        <dbReference type="ChEBI" id="CHEBI:57540"/>
        <dbReference type="ChEBI" id="CHEBI:57945"/>
        <dbReference type="EC" id="1.2.1.10"/>
    </reaction>
</comment>
<comment type="pathway">
    <text evidence="1">Aromatic compound metabolism; 3-phenylpropanoate degradation.</text>
</comment>
<comment type="subunit">
    <text evidence="1">Interacts with MhpE.</text>
</comment>
<comment type="similarity">
    <text evidence="1">Belongs to the acetaldehyde dehydrogenase family.</text>
</comment>
<evidence type="ECO:0000255" key="1">
    <source>
        <dbReference type="HAMAP-Rule" id="MF_01657"/>
    </source>
</evidence>
<sequence>MRKRKVAIIGSGNIGTDLMIKILRHGQHLEMAVMVGIDPQSDGLARARRLGVATTHEGVGGLMQMAEFADIDFVFDATSAGAHIKNDAALREAKPGIRVIDLTPAAIGPYCVPVVNLADNLHQGNVNMVTCGGQATIPMVAAVSRVAKVHYAEIVASIASQSAGPGTRANIDEFTETTSQAIEKVGGAGKGKAIIVLNPAEPPLMMRDTVYILSELASQEAIAASIAEMAAAVQAYVPGYRLKQQVQFEVIPEDRPVNLPGVGCFSGLKTAVYLEVEGAAHYLPAYAGNLDIMTSAALATAEQMAGAMHSAAGATA</sequence>
<accession>A6TAC5</accession>
<reference key="1">
    <citation type="submission" date="2006-09" db="EMBL/GenBank/DDBJ databases">
        <authorList>
            <consortium name="The Klebsiella pneumonia Genome Sequencing Project"/>
            <person name="McClelland M."/>
            <person name="Sanderson E.K."/>
            <person name="Spieth J."/>
            <person name="Clifton W.S."/>
            <person name="Latreille P."/>
            <person name="Sabo A."/>
            <person name="Pepin K."/>
            <person name="Bhonagiri V."/>
            <person name="Porwollik S."/>
            <person name="Ali J."/>
            <person name="Wilson R.K."/>
        </authorList>
    </citation>
    <scope>NUCLEOTIDE SEQUENCE [LARGE SCALE GENOMIC DNA]</scope>
    <source>
        <strain>ATCC 700721 / MGH 78578</strain>
    </source>
</reference>
<feature type="chain" id="PRO_0000337982" description="Acetaldehyde dehydrogenase">
    <location>
        <begin position="1"/>
        <end position="316"/>
    </location>
</feature>
<feature type="active site" description="Acyl-thioester intermediate" evidence="1">
    <location>
        <position position="131"/>
    </location>
</feature>
<feature type="binding site" evidence="1">
    <location>
        <begin position="11"/>
        <end position="14"/>
    </location>
    <ligand>
        <name>NAD(+)</name>
        <dbReference type="ChEBI" id="CHEBI:57540"/>
    </ligand>
</feature>
<feature type="binding site" evidence="1">
    <location>
        <begin position="162"/>
        <end position="170"/>
    </location>
    <ligand>
        <name>NAD(+)</name>
        <dbReference type="ChEBI" id="CHEBI:57540"/>
    </ligand>
</feature>
<feature type="binding site" evidence="1">
    <location>
        <position position="289"/>
    </location>
    <ligand>
        <name>NAD(+)</name>
        <dbReference type="ChEBI" id="CHEBI:57540"/>
    </ligand>
</feature>
<protein>
    <recommendedName>
        <fullName evidence="1">Acetaldehyde dehydrogenase</fullName>
        <ecNumber evidence="1">1.2.1.10</ecNumber>
    </recommendedName>
    <alternativeName>
        <fullName evidence="1">Acetaldehyde dehydrogenase [acetylating]</fullName>
    </alternativeName>
</protein>
<organism>
    <name type="scientific">Klebsiella pneumoniae subsp. pneumoniae (strain ATCC 700721 / MGH 78578)</name>
    <dbReference type="NCBI Taxonomy" id="272620"/>
    <lineage>
        <taxon>Bacteria</taxon>
        <taxon>Pseudomonadati</taxon>
        <taxon>Pseudomonadota</taxon>
        <taxon>Gammaproteobacteria</taxon>
        <taxon>Enterobacterales</taxon>
        <taxon>Enterobacteriaceae</taxon>
        <taxon>Klebsiella/Raoultella group</taxon>
        <taxon>Klebsiella</taxon>
        <taxon>Klebsiella pneumoniae complex</taxon>
    </lineage>
</organism>
<proteinExistence type="inferred from homology"/>
<keyword id="KW-0058">Aromatic hydrocarbons catabolism</keyword>
<keyword id="KW-0520">NAD</keyword>
<keyword id="KW-0560">Oxidoreductase</keyword>